<evidence type="ECO:0000255" key="1"/>
<evidence type="ECO:0000305" key="2"/>
<dbReference type="EC" id="2.7.1.2"/>
<dbReference type="EMBL" id="AF248653">
    <property type="protein sequence ID" value="AAG17617.1"/>
    <property type="molecule type" value="Genomic_DNA"/>
</dbReference>
<dbReference type="SMR" id="Q9GTW8"/>
<dbReference type="VEuPathDB" id="TrichDB:TVAG_023840"/>
<dbReference type="VEuPathDB" id="TrichDB:TVAGG3_0769650"/>
<dbReference type="eggNOG" id="ENOG502S3Y5">
    <property type="taxonomic scope" value="Eukaryota"/>
</dbReference>
<dbReference type="OMA" id="WSTGPIY"/>
<dbReference type="GO" id="GO:0005524">
    <property type="term" value="F:ATP binding"/>
    <property type="evidence" value="ECO:0007669"/>
    <property type="project" value="UniProtKB-KW"/>
</dbReference>
<dbReference type="GO" id="GO:0005536">
    <property type="term" value="F:D-glucose binding"/>
    <property type="evidence" value="ECO:0007669"/>
    <property type="project" value="InterPro"/>
</dbReference>
<dbReference type="GO" id="GO:0004340">
    <property type="term" value="F:glucokinase activity"/>
    <property type="evidence" value="ECO:0007669"/>
    <property type="project" value="UniProtKB-EC"/>
</dbReference>
<dbReference type="GO" id="GO:0006096">
    <property type="term" value="P:glycolytic process"/>
    <property type="evidence" value="ECO:0007669"/>
    <property type="project" value="UniProtKB-KW"/>
</dbReference>
<dbReference type="CDD" id="cd24008">
    <property type="entry name" value="ASKHA_NBD_GLK"/>
    <property type="match status" value="1"/>
</dbReference>
<dbReference type="Gene3D" id="3.30.420.40">
    <property type="match status" value="1"/>
</dbReference>
<dbReference type="Gene3D" id="3.40.367.20">
    <property type="match status" value="1"/>
</dbReference>
<dbReference type="InterPro" id="IPR043129">
    <property type="entry name" value="ATPase_NBD"/>
</dbReference>
<dbReference type="InterPro" id="IPR003836">
    <property type="entry name" value="Glucokinase"/>
</dbReference>
<dbReference type="PANTHER" id="PTHR47450">
    <property type="entry name" value="GLUCOKINASE"/>
    <property type="match status" value="1"/>
</dbReference>
<dbReference type="PANTHER" id="PTHR47450:SF1">
    <property type="entry name" value="GLUCOKINASE"/>
    <property type="match status" value="1"/>
</dbReference>
<dbReference type="Pfam" id="PF02685">
    <property type="entry name" value="Glucokinase"/>
    <property type="match status" value="1"/>
</dbReference>
<dbReference type="SUPFAM" id="SSF53067">
    <property type="entry name" value="Actin-like ATPase domain"/>
    <property type="match status" value="1"/>
</dbReference>
<sequence>MFDIELVKKINDWKVSEDGALPICIGCDVGGSGLRVRISSFNDSEKYVDLGHAKAKCTKQLVDVLADLEQKIKQVNDKFVCLGAAIAVAGPIKAGTVILTNWQGEPAVRTLTLKDLPQKIFPKDRSVFLNDLEAGAYGVIAAADKDILEQNFVQLFQDKAPKGPVLANGRTAVLAMGSGLGAALVVRTPLLKNPLVLPTELGHVQIAPNMKEHKNFKQERELIQHISNHYYKGELDPEYEDICSGRGLPLAYQFYHQKKTGELLPVEQIDAGEVAKKAMDGEEDAVDALKAHYIFYLRAAKAIATSLSCESCVLSLDNQVKNHPFVMKIMKELEDEFYEFIRPDWMNGLRVYSQKSILNFNILGTDYMAHAIANKPE</sequence>
<gene>
    <name type="primary">GK2</name>
</gene>
<reference key="1">
    <citation type="journal article" date="2001" name="Gene">
        <title>Evolutionary relationships of the glucokinase from the amitochondriate protist, Trichomonas vaginalis.</title>
        <authorList>
            <person name="Wu G."/>
            <person name="Henze K."/>
            <person name="Mueller M."/>
        </authorList>
    </citation>
    <scope>NUCLEOTIDE SEQUENCE [GENOMIC DNA]</scope>
    <source>
        <strain>ATCC 30001 / NIH-C1</strain>
    </source>
</reference>
<name>GLK2_TRIVA</name>
<proteinExistence type="inferred from homology"/>
<organism>
    <name type="scientific">Trichomonas vaginalis</name>
    <dbReference type="NCBI Taxonomy" id="5722"/>
    <lineage>
        <taxon>Eukaryota</taxon>
        <taxon>Metamonada</taxon>
        <taxon>Parabasalia</taxon>
        <taxon>Trichomonadida</taxon>
        <taxon>Trichomonadidae</taxon>
        <taxon>Trichomonas</taxon>
    </lineage>
</organism>
<feature type="chain" id="PRO_0000215152" description="Probable glucokinase 2">
    <location>
        <begin position="1"/>
        <end position="377"/>
    </location>
</feature>
<feature type="binding site" evidence="1">
    <location>
        <begin position="27"/>
        <end position="32"/>
    </location>
    <ligand>
        <name>ATP</name>
        <dbReference type="ChEBI" id="CHEBI:30616"/>
    </ligand>
</feature>
<accession>Q9GTW8</accession>
<protein>
    <recommendedName>
        <fullName>Probable glucokinase 2</fullName>
        <ecNumber>2.7.1.2</ecNumber>
    </recommendedName>
    <alternativeName>
        <fullName>Glucose kinase 2</fullName>
    </alternativeName>
    <alternativeName>
        <fullName>Hexokinase-2</fullName>
    </alternativeName>
</protein>
<comment type="catalytic activity">
    <reaction>
        <text>D-glucose + ATP = D-glucose 6-phosphate + ADP + H(+)</text>
        <dbReference type="Rhea" id="RHEA:17825"/>
        <dbReference type="ChEBI" id="CHEBI:4167"/>
        <dbReference type="ChEBI" id="CHEBI:15378"/>
        <dbReference type="ChEBI" id="CHEBI:30616"/>
        <dbReference type="ChEBI" id="CHEBI:61548"/>
        <dbReference type="ChEBI" id="CHEBI:456216"/>
        <dbReference type="EC" id="2.7.1.2"/>
    </reaction>
</comment>
<comment type="similarity">
    <text evidence="2">Belongs to the bacterial glucokinase family.</text>
</comment>
<keyword id="KW-0067">ATP-binding</keyword>
<keyword id="KW-0324">Glycolysis</keyword>
<keyword id="KW-0418">Kinase</keyword>
<keyword id="KW-0547">Nucleotide-binding</keyword>
<keyword id="KW-0808">Transferase</keyword>